<name>TTC21_CAEEL</name>
<sequence length="1324" mass="151169">MDSESDDNPNDPEDRKKWGHKDVEHWRAVSNVHYYAREGYFGTAILVCDGRLATIKDPALAILKGVCLTLLGKIPDAIRHLETFVTDNDVALGALHALKWAHASAFNPDNKSIVEIETEISTRARNEKTPYTSYATASEVLYFAGEYQKSKQMLDIARKRATEKHAKHYCLLGWIELALGKKQKSTQELFEKAGGQEYPDGNIGRCKILEGHHSAPEMKVAANELAISTIHFLPGHIEKAKASIMMKDWRGVMDCIMNADQPEGSNPYIEVLRTVHGICYAGEVSMLKRTLQLLLKSLDENEATNHVLYARITKLLVSISGRDEKILRHARDFLTRALKISRKPDYVALSMRIAFGLGGAKEVSTLSQELVALDCEDSYAVLSSVVSMLMISRVSDARAQFDILPSAHPKLLESPLYYLIASVLAKQSKDKSFENFRQHIENLVEMLRNQLQSFPFGLDYLSLFSSDLLYSAVEQCFDFYPLVPIKAPDDCMKLTAKTLQMIYDVAPGLAHCTLQLARNSYLCSNTNAAEKWIEKVLDKDDSLADAHILRAELILDRGGKITDADDALVTGLNFNFKLRETSLYHLIKSKTFKKRNENDEAIKTLKMALQIPRKEPSKNLFQPKESADTHKISVQLELIDTLQHMKRIQEAETTMTDALAEWAGQPEQDQLVIAQAQLYLTKGHVERALGILKKIQPGQSNFHLSRIKMAEIYLEEKKDKRMFAACYRELLKVEATPGSYSLLGDAFMKVQEPEDAINFYEQALKMQSKDVQLAEKIGEAYVMAHLYSKAVNFYESSMNIYKDKNMRLKLANLLLKLRNFEKCEKVLRAPFERDPEPVGTETIQTYIQFLLLLAECHEMMDNVPEAMNDFEKAKSLHSRIQDKTLTAALKKEGARICNLQAELLYRRREFSQAVDICKQALAYHETDLKANLLLSKIFKEENKWTLVLQPCQTVIQVDPHNDEANSILADFYYIRSEAAHASTSYTTLLNTNPQHWHALSRVVELFCRNGEQNAAEKHLDRAKEVNPRCVTESGYNVCRGRFEWYTGDQNEALRYYSRTKDSAAGWREKALYYMIDICLNPDNEIIIDENSVENPETTIVEEASEQQKLAKYYLDLLGKLPTTDRFLLAQNFIRMHTTDKSAIQAALDEFNRMAFNADRSQVTNVGAVFGVARGHVLLKQVQKAKTVLKMVNGRVWNFDDSDYLEKCWLMLADIYINQNKNDQAVTFLDLVFKYNCNCLKAFELYGYMREKEQKYVEAYKMYEKAFMATKERNPGFGYKLAFTYLKAKRLFACIETCQKVLDLNPQYPKIKKEIMDKAKALIRT</sequence>
<evidence type="ECO:0000269" key="1">
    <source>
    </source>
</evidence>
<evidence type="ECO:0000269" key="2">
    <source>
    </source>
</evidence>
<evidence type="ECO:0000303" key="3">
    <source>
    </source>
</evidence>
<evidence type="ECO:0000305" key="4"/>
<evidence type="ECO:0000312" key="5">
    <source>
        <dbReference type="WormBase" id="ZK328.7a"/>
    </source>
</evidence>
<evidence type="ECO:0000312" key="6">
    <source>
        <dbReference type="WormBase" id="ZK328.7b"/>
    </source>
</evidence>
<gene>
    <name evidence="3 5" type="primary">ift-139</name>
    <name evidence="5" type="ORF">ZK328.7</name>
</gene>
<accession>Q20255</accession>
<accession>Q23468</accession>
<accession>Q7Z146</accession>
<keyword id="KW-0025">Alternative splicing</keyword>
<keyword id="KW-0966">Cell projection</keyword>
<keyword id="KW-0970">Cilium biogenesis/degradation</keyword>
<keyword id="KW-0963">Cytoplasm</keyword>
<keyword id="KW-0206">Cytoskeleton</keyword>
<keyword id="KW-1185">Reference proteome</keyword>
<keyword id="KW-0677">Repeat</keyword>
<keyword id="KW-0802">TPR repeat</keyword>
<proteinExistence type="evidence at protein level"/>
<feature type="chain" id="PRO_0000106425" description="Tetratricopeptide repeat protein 21 homolog">
    <location>
        <begin position="1"/>
        <end position="1324"/>
    </location>
</feature>
<feature type="repeat" description="TPR 1">
    <location>
        <begin position="58"/>
        <end position="91"/>
    </location>
</feature>
<feature type="repeat" description="TPR 2">
    <location>
        <begin position="414"/>
        <end position="446"/>
    </location>
</feature>
<feature type="repeat" description="TPR 3">
    <location>
        <begin position="582"/>
        <end position="615"/>
    </location>
</feature>
<feature type="repeat" description="TPR 4">
    <location>
        <begin position="669"/>
        <end position="702"/>
    </location>
</feature>
<feature type="repeat" description="TPR 5">
    <location>
        <begin position="737"/>
        <end position="770"/>
    </location>
</feature>
<feature type="repeat" description="TPR 6">
    <location>
        <begin position="772"/>
        <end position="804"/>
    </location>
</feature>
<feature type="repeat" description="TPR 7">
    <location>
        <begin position="806"/>
        <end position="837"/>
    </location>
</feature>
<feature type="repeat" description="TPR 8">
    <location>
        <begin position="847"/>
        <end position="880"/>
    </location>
</feature>
<feature type="repeat" description="TPR 9">
    <location>
        <begin position="894"/>
        <end position="927"/>
    </location>
</feature>
<feature type="repeat" description="TPR 10">
    <location>
        <begin position="929"/>
        <end position="961"/>
    </location>
</feature>
<feature type="repeat" description="TPR 11">
    <location>
        <begin position="963"/>
        <end position="995"/>
    </location>
</feature>
<feature type="repeat" description="TPR 12">
    <location>
        <begin position="997"/>
        <end position="1029"/>
    </location>
</feature>
<feature type="repeat" description="TPR 13">
    <location>
        <begin position="1033"/>
        <end position="1066"/>
    </location>
</feature>
<feature type="repeat" description="TPR 14">
    <location>
        <begin position="1205"/>
        <end position="1238"/>
    </location>
</feature>
<feature type="repeat" description="TPR 15">
    <location>
        <begin position="1240"/>
        <end position="1272"/>
    </location>
</feature>
<feature type="repeat" description="TPR 16">
    <location>
        <begin position="1274"/>
        <end position="1307"/>
    </location>
</feature>
<feature type="splice variant" id="VSP_041855" description="In isoform b." evidence="4">
    <location>
        <begin position="1099"/>
        <end position="1324"/>
    </location>
</feature>
<feature type="mutagenesis site" description="Defective cilia morphology." evidence="1">
    <original>L</original>
    <variation>P</variation>
    <location>
        <position position="810"/>
    </location>
</feature>
<comment type="function">
    <text evidence="1 2">Component of the IFT complex A (IFT-A), a complex required for retrograde ciliary transport (PubMed:27515926, PubMed:28479320). In particular, may act redundantly with the intraflagellar transport protein ift-43 to regulate the transport of specific ciliary cargo proteins such as che-3 which are related to motility (PubMed:28479320). Functions in cilia biogenesis (PubMed:27515926).</text>
</comment>
<comment type="subunit">
    <text evidence="2">Component of the IFT complex A (IFT-A) composed of at least che-11, daf-10, dyf-2, ift-139, ift-43 and ifta-1.</text>
</comment>
<comment type="subcellular location">
    <subcellularLocation>
        <location evidence="1 2">Cell projection</location>
        <location evidence="1 2">Cilium</location>
    </subcellularLocation>
    <subcellularLocation>
        <location evidence="1">Cytoplasm</location>
        <location evidence="1">Cytoskeleton</location>
        <location evidence="1">Cilium basal body</location>
    </subcellularLocation>
    <subcellularLocation>
        <location evidence="1">Cell projection</location>
        <location evidence="1">Dendrite</location>
    </subcellularLocation>
</comment>
<comment type="alternative products">
    <event type="alternative splicing"/>
    <isoform>
        <id>Q20255-1</id>
        <name evidence="5">a</name>
        <sequence type="displayed"/>
    </isoform>
    <isoform>
        <id>Q20255-2</id>
        <name evidence="6">b</name>
        <sequence type="described" ref="VSP_041855"/>
    </isoform>
</comment>
<comment type="tissue specificity">
    <text evidence="1 2">Expressed in ciliated sensory neurons in the head and tail.</text>
</comment>
<comment type="disruption phenotype">
    <text evidence="1 2">Shorter cilia with an irregular morphology resulting in functional defects characterized by defective movement, dauer formation, and mating behavior (PubMed:27515926). Double knockout with intraflagellar transport protein ift-43 results in defective cilium morphology and function (PubMed:28479320).</text>
</comment>
<comment type="similarity">
    <text evidence="4">Belongs to the TTC21 family.</text>
</comment>
<reference key="1">
    <citation type="journal article" date="1998" name="Science">
        <title>Genome sequence of the nematode C. elegans: a platform for investigating biology.</title>
        <authorList>
            <consortium name="The C. elegans sequencing consortium"/>
        </authorList>
    </citation>
    <scope>NUCLEOTIDE SEQUENCE [LARGE SCALE GENOMIC DNA]</scope>
    <scope>ALTERNATIVE SPLICING</scope>
    <source>
        <strain>Bristol N2</strain>
    </source>
</reference>
<reference key="2">
    <citation type="journal article" date="2016" name="Sci. Rep.">
        <title>The nephronophthisis-related gene ift-139 is required for ciliogenesis in Caenorhabditis elegans.</title>
        <authorList>
            <person name="Niwa S."/>
        </authorList>
    </citation>
    <scope>FUNCTION</scope>
    <scope>SUBCELLULAR LOCATION</scope>
    <scope>TISSUE SPECIFICITY</scope>
    <scope>DISRUPTION PHENOTYPE</scope>
    <scope>MUTAGENESIS OF LEU-810</scope>
</reference>
<reference key="3">
    <citation type="journal article" date="2017" name="Curr. Biol.">
        <title>Dynein-driven retrograde intraflagellar transport is triphasic in C. elegans sensory cilia.</title>
        <authorList>
            <person name="Yi P."/>
            <person name="Li W.J."/>
            <person name="Dong M.Q."/>
            <person name="Ou G."/>
        </authorList>
    </citation>
    <scope>FUNCTION</scope>
    <scope>IDENTIFICATION IN IFT COMPLEX A</scope>
    <scope>SUBCELLULAR LOCATION</scope>
    <scope>TISSUE SPECIFICITY</scope>
    <scope>DISRUPTION PHENOTYPE</scope>
    <scope>IDENTIFICATION BY MASS SPECTROMETRY</scope>
</reference>
<organism>
    <name type="scientific">Caenorhabditis elegans</name>
    <dbReference type="NCBI Taxonomy" id="6239"/>
    <lineage>
        <taxon>Eukaryota</taxon>
        <taxon>Metazoa</taxon>
        <taxon>Ecdysozoa</taxon>
        <taxon>Nematoda</taxon>
        <taxon>Chromadorea</taxon>
        <taxon>Rhabditida</taxon>
        <taxon>Rhabditina</taxon>
        <taxon>Rhabditomorpha</taxon>
        <taxon>Rhabditoidea</taxon>
        <taxon>Rhabditidae</taxon>
        <taxon>Peloderinae</taxon>
        <taxon>Caenorhabditis</taxon>
    </lineage>
</organism>
<protein>
    <recommendedName>
        <fullName>Tetratricopeptide repeat protein 21 homolog</fullName>
        <shortName>TPR repeat protein 21 homolog</shortName>
    </recommendedName>
    <alternativeName>
        <fullName evidence="3">Intraflagellar transport protein 139 homolog</fullName>
    </alternativeName>
</protein>
<dbReference type="EMBL" id="FO081350">
    <property type="protein sequence ID" value="CCD70952.1"/>
    <property type="molecule type" value="Genomic_DNA"/>
</dbReference>
<dbReference type="EMBL" id="FO081350">
    <property type="protein sequence ID" value="CCD70957.1"/>
    <property type="molecule type" value="Genomic_DNA"/>
</dbReference>
<dbReference type="PIR" id="C88473">
    <property type="entry name" value="C88473"/>
</dbReference>
<dbReference type="PIR" id="T29012">
    <property type="entry name" value="T29012"/>
</dbReference>
<dbReference type="RefSeq" id="NP_001022993.2">
    <molecule id="Q20255-1"/>
    <property type="nucleotide sequence ID" value="NM_001027822.5"/>
</dbReference>
<dbReference type="RefSeq" id="NP_001022994.1">
    <molecule id="Q20255-2"/>
    <property type="nucleotide sequence ID" value="NM_001027823.4"/>
</dbReference>
<dbReference type="SMR" id="Q20255"/>
<dbReference type="BioGRID" id="41076">
    <property type="interactions" value="2"/>
</dbReference>
<dbReference type="ComplexPortal" id="CPX-1289">
    <property type="entry name" value="Intraflagellar transport complex A"/>
</dbReference>
<dbReference type="FunCoup" id="Q20255">
    <property type="interactions" value="1060"/>
</dbReference>
<dbReference type="IntAct" id="Q20255">
    <property type="interactions" value="1"/>
</dbReference>
<dbReference type="STRING" id="6239.ZK328.7a.1"/>
<dbReference type="PaxDb" id="6239-ZK328.7a"/>
<dbReference type="EnsemblMetazoa" id="ZK328.7a.1">
    <molecule id="Q20255-1"/>
    <property type="protein sequence ID" value="ZK328.7a.1"/>
    <property type="gene ID" value="WBGene00022696"/>
</dbReference>
<dbReference type="EnsemblMetazoa" id="ZK328.7b.1">
    <molecule id="Q20255-2"/>
    <property type="protein sequence ID" value="ZK328.7b.1"/>
    <property type="gene ID" value="WBGene00022696"/>
</dbReference>
<dbReference type="GeneID" id="175855"/>
<dbReference type="KEGG" id="cel:CELE_ZK328.7"/>
<dbReference type="UCSC" id="ZK328.7a">
    <property type="organism name" value="c. elegans"/>
</dbReference>
<dbReference type="AGR" id="WB:WBGene00022696"/>
<dbReference type="CTD" id="175855"/>
<dbReference type="WormBase" id="ZK328.7a">
    <molecule id="Q20255-1"/>
    <property type="protein sequence ID" value="CE44936"/>
    <property type="gene ID" value="WBGene00022696"/>
    <property type="gene designation" value="ift-139"/>
</dbReference>
<dbReference type="WormBase" id="ZK328.7b">
    <molecule id="Q20255-2"/>
    <property type="protein sequence ID" value="CE34449"/>
    <property type="gene ID" value="WBGene00022696"/>
    <property type="gene designation" value="ift-139"/>
</dbReference>
<dbReference type="eggNOG" id="ENOG502QQAB">
    <property type="taxonomic scope" value="Eukaryota"/>
</dbReference>
<dbReference type="GeneTree" id="ENSGT00390000005979"/>
<dbReference type="HOGENOM" id="CLU_006149_0_0_1"/>
<dbReference type="InParanoid" id="Q20255"/>
<dbReference type="OMA" id="NATCVRA"/>
<dbReference type="OrthoDB" id="10259630at2759"/>
<dbReference type="PhylomeDB" id="Q20255"/>
<dbReference type="Reactome" id="R-CEL-5610787">
    <property type="pathway name" value="Hedgehog 'off' state"/>
</dbReference>
<dbReference type="Reactome" id="R-CEL-5620924">
    <property type="pathway name" value="Intraflagellar transport"/>
</dbReference>
<dbReference type="PRO" id="PR:Q20255"/>
<dbReference type="Proteomes" id="UP000001940">
    <property type="component" value="Chromosome III"/>
</dbReference>
<dbReference type="Bgee" id="WBGene00022696">
    <property type="expression patterns" value="Expressed in pharyngeal muscle cell (C elegans) and 3 other cell types or tissues"/>
</dbReference>
<dbReference type="GO" id="GO:0005929">
    <property type="term" value="C:cilium"/>
    <property type="evidence" value="ECO:0000303"/>
    <property type="project" value="ComplexPortal"/>
</dbReference>
<dbReference type="GO" id="GO:0005737">
    <property type="term" value="C:cytoplasm"/>
    <property type="evidence" value="ECO:0007669"/>
    <property type="project" value="UniProtKB-KW"/>
</dbReference>
<dbReference type="GO" id="GO:0005856">
    <property type="term" value="C:cytoskeleton"/>
    <property type="evidence" value="ECO:0007669"/>
    <property type="project" value="UniProtKB-KW"/>
</dbReference>
<dbReference type="GO" id="GO:0030425">
    <property type="term" value="C:dendrite"/>
    <property type="evidence" value="ECO:0007669"/>
    <property type="project" value="UniProtKB-SubCell"/>
</dbReference>
<dbReference type="GO" id="GO:0030991">
    <property type="term" value="C:intraciliary transport particle A"/>
    <property type="evidence" value="ECO:0000318"/>
    <property type="project" value="GO_Central"/>
</dbReference>
<dbReference type="GO" id="GO:0060271">
    <property type="term" value="P:cilium assembly"/>
    <property type="evidence" value="ECO:0000303"/>
    <property type="project" value="ComplexPortal"/>
</dbReference>
<dbReference type="GO" id="GO:0035721">
    <property type="term" value="P:intraciliary retrograde transport"/>
    <property type="evidence" value="ECO:0000318"/>
    <property type="project" value="GO_Central"/>
</dbReference>
<dbReference type="GO" id="GO:0061512">
    <property type="term" value="P:protein localization to cilium"/>
    <property type="evidence" value="ECO:0000318"/>
    <property type="project" value="GO_Central"/>
</dbReference>
<dbReference type="FunFam" id="1.25.40.10:FF:003691">
    <property type="entry name" value="Tetratricopeptide repeat protein 21 homolog"/>
    <property type="match status" value="1"/>
</dbReference>
<dbReference type="FunFam" id="1.25.40.10:FF:003694">
    <property type="entry name" value="Tetratricopeptide repeat protein 21 homolog"/>
    <property type="match status" value="1"/>
</dbReference>
<dbReference type="FunFam" id="1.25.40.10:FF:003748">
    <property type="entry name" value="Tetratricopeptide repeat protein 21 homolog"/>
    <property type="match status" value="1"/>
</dbReference>
<dbReference type="Gene3D" id="1.25.40.10">
    <property type="entry name" value="Tetratricopeptide repeat domain"/>
    <property type="match status" value="4"/>
</dbReference>
<dbReference type="InterPro" id="IPR056832">
    <property type="entry name" value="ARM_TT21_2nd"/>
</dbReference>
<dbReference type="InterPro" id="IPR056836">
    <property type="entry name" value="ARM_TT21_4th"/>
</dbReference>
<dbReference type="InterPro" id="IPR056835">
    <property type="entry name" value="ARM_TT21_5th"/>
</dbReference>
<dbReference type="InterPro" id="IPR056834">
    <property type="entry name" value="ARM_TT21_C"/>
</dbReference>
<dbReference type="InterPro" id="IPR056833">
    <property type="entry name" value="ARM_TT21_N"/>
</dbReference>
<dbReference type="InterPro" id="IPR011990">
    <property type="entry name" value="TPR-like_helical_dom_sf"/>
</dbReference>
<dbReference type="InterPro" id="IPR019734">
    <property type="entry name" value="TPR_rpt"/>
</dbReference>
<dbReference type="InterPro" id="IPR040364">
    <property type="entry name" value="TTC21A/TTC21B"/>
</dbReference>
<dbReference type="PANTHER" id="PTHR14699">
    <property type="entry name" value="STI2 PROTEIN-RELATED"/>
    <property type="match status" value="1"/>
</dbReference>
<dbReference type="PANTHER" id="PTHR14699:SF0">
    <property type="entry name" value="TETRATRICOPEPTIDE REPEAT PROTEIN 21 HOMOLOG"/>
    <property type="match status" value="1"/>
</dbReference>
<dbReference type="Pfam" id="PF25058">
    <property type="entry name" value="ARM_TT21"/>
    <property type="match status" value="1"/>
</dbReference>
<dbReference type="Pfam" id="PF25060">
    <property type="entry name" value="ARM_TT21_2nd"/>
    <property type="match status" value="1"/>
</dbReference>
<dbReference type="Pfam" id="PF25068">
    <property type="entry name" value="ARM_TT21_4th"/>
    <property type="match status" value="1"/>
</dbReference>
<dbReference type="Pfam" id="PF25064">
    <property type="entry name" value="ARM_TT21_5th"/>
    <property type="match status" value="1"/>
</dbReference>
<dbReference type="Pfam" id="PF25063">
    <property type="entry name" value="ARM_TT21_C"/>
    <property type="match status" value="1"/>
</dbReference>
<dbReference type="Pfam" id="PF25062">
    <property type="entry name" value="ARM_TT21_N"/>
    <property type="match status" value="1"/>
</dbReference>
<dbReference type="Pfam" id="PF13176">
    <property type="entry name" value="TPR_7"/>
    <property type="match status" value="1"/>
</dbReference>
<dbReference type="SMART" id="SM00028">
    <property type="entry name" value="TPR"/>
    <property type="match status" value="9"/>
</dbReference>
<dbReference type="SUPFAM" id="SSF48452">
    <property type="entry name" value="TPR-like"/>
    <property type="match status" value="4"/>
</dbReference>
<dbReference type="PROSITE" id="PS50005">
    <property type="entry name" value="TPR"/>
    <property type="match status" value="11"/>
</dbReference>
<dbReference type="PROSITE" id="PS50293">
    <property type="entry name" value="TPR_REGION"/>
    <property type="match status" value="2"/>
</dbReference>